<sequence>MVKIQNYGTGRRKSSSARVFLRSGDGEITVNKRSLKDYFGRETSCMVVRQPLELVDMMNNFNIYITVKGGGVSGQAGAIRQGITRALIKYNHLLRSELRKSGFVTRDSRQVERKKVGFRKSRKRTQFSKR</sequence>
<keyword id="KW-0687">Ribonucleoprotein</keyword>
<keyword id="KW-0689">Ribosomal protein</keyword>
<feature type="chain" id="PRO_0000111336" description="Small ribosomal subunit protein uS9">
    <location>
        <begin position="1"/>
        <end position="130"/>
    </location>
</feature>
<feature type="region of interest" description="Disordered" evidence="2">
    <location>
        <begin position="105"/>
        <end position="130"/>
    </location>
</feature>
<feature type="compositionally biased region" description="Basic and acidic residues" evidence="2">
    <location>
        <begin position="105"/>
        <end position="115"/>
    </location>
</feature>
<feature type="compositionally biased region" description="Basic residues" evidence="2">
    <location>
        <begin position="116"/>
        <end position="130"/>
    </location>
</feature>
<evidence type="ECO:0000255" key="1">
    <source>
        <dbReference type="HAMAP-Rule" id="MF_00532"/>
    </source>
</evidence>
<evidence type="ECO:0000256" key="2">
    <source>
        <dbReference type="SAM" id="MobiDB-lite"/>
    </source>
</evidence>
<evidence type="ECO:0000305" key="3"/>
<proteinExistence type="inferred from homology"/>
<organism>
    <name type="scientific">Buchnera aphidicola subsp. Schizaphis graminum (strain Sg)</name>
    <dbReference type="NCBI Taxonomy" id="198804"/>
    <lineage>
        <taxon>Bacteria</taxon>
        <taxon>Pseudomonadati</taxon>
        <taxon>Pseudomonadota</taxon>
        <taxon>Gammaproteobacteria</taxon>
        <taxon>Enterobacterales</taxon>
        <taxon>Erwiniaceae</taxon>
        <taxon>Buchnera</taxon>
    </lineage>
</organism>
<gene>
    <name evidence="1" type="primary">rpsI</name>
    <name type="ordered locus">BUsg_377</name>
</gene>
<accession>Q8K9G0</accession>
<dbReference type="EMBL" id="AE013218">
    <property type="protein sequence ID" value="AAM67929.1"/>
    <property type="molecule type" value="Genomic_DNA"/>
</dbReference>
<dbReference type="RefSeq" id="WP_011053896.1">
    <property type="nucleotide sequence ID" value="NC_004061.1"/>
</dbReference>
<dbReference type="SMR" id="Q8K9G0"/>
<dbReference type="STRING" id="198804.BUsg_377"/>
<dbReference type="GeneID" id="93003847"/>
<dbReference type="KEGG" id="bas:BUsg_377"/>
<dbReference type="eggNOG" id="COG0103">
    <property type="taxonomic scope" value="Bacteria"/>
</dbReference>
<dbReference type="HOGENOM" id="CLU_046483_2_1_6"/>
<dbReference type="Proteomes" id="UP000000416">
    <property type="component" value="Chromosome"/>
</dbReference>
<dbReference type="GO" id="GO:0022627">
    <property type="term" value="C:cytosolic small ribosomal subunit"/>
    <property type="evidence" value="ECO:0007669"/>
    <property type="project" value="TreeGrafter"/>
</dbReference>
<dbReference type="GO" id="GO:0003723">
    <property type="term" value="F:RNA binding"/>
    <property type="evidence" value="ECO:0007669"/>
    <property type="project" value="TreeGrafter"/>
</dbReference>
<dbReference type="GO" id="GO:0003735">
    <property type="term" value="F:structural constituent of ribosome"/>
    <property type="evidence" value="ECO:0007669"/>
    <property type="project" value="InterPro"/>
</dbReference>
<dbReference type="GO" id="GO:0006412">
    <property type="term" value="P:translation"/>
    <property type="evidence" value="ECO:0007669"/>
    <property type="project" value="UniProtKB-UniRule"/>
</dbReference>
<dbReference type="FunFam" id="3.30.230.10:FF:000001">
    <property type="entry name" value="30S ribosomal protein S9"/>
    <property type="match status" value="1"/>
</dbReference>
<dbReference type="Gene3D" id="3.30.230.10">
    <property type="match status" value="1"/>
</dbReference>
<dbReference type="HAMAP" id="MF_00532_B">
    <property type="entry name" value="Ribosomal_uS9_B"/>
    <property type="match status" value="1"/>
</dbReference>
<dbReference type="InterPro" id="IPR020568">
    <property type="entry name" value="Ribosomal_Su5_D2-typ_SF"/>
</dbReference>
<dbReference type="InterPro" id="IPR000754">
    <property type="entry name" value="Ribosomal_uS9"/>
</dbReference>
<dbReference type="InterPro" id="IPR023035">
    <property type="entry name" value="Ribosomal_uS9_bac/plastid"/>
</dbReference>
<dbReference type="InterPro" id="IPR020574">
    <property type="entry name" value="Ribosomal_uS9_CS"/>
</dbReference>
<dbReference type="InterPro" id="IPR014721">
    <property type="entry name" value="Ribsml_uS5_D2-typ_fold_subgr"/>
</dbReference>
<dbReference type="NCBIfam" id="NF001099">
    <property type="entry name" value="PRK00132.1"/>
    <property type="match status" value="1"/>
</dbReference>
<dbReference type="PANTHER" id="PTHR21569">
    <property type="entry name" value="RIBOSOMAL PROTEIN S9"/>
    <property type="match status" value="1"/>
</dbReference>
<dbReference type="PANTHER" id="PTHR21569:SF1">
    <property type="entry name" value="SMALL RIBOSOMAL SUBUNIT PROTEIN US9M"/>
    <property type="match status" value="1"/>
</dbReference>
<dbReference type="Pfam" id="PF00380">
    <property type="entry name" value="Ribosomal_S9"/>
    <property type="match status" value="1"/>
</dbReference>
<dbReference type="SUPFAM" id="SSF54211">
    <property type="entry name" value="Ribosomal protein S5 domain 2-like"/>
    <property type="match status" value="1"/>
</dbReference>
<dbReference type="PROSITE" id="PS00360">
    <property type="entry name" value="RIBOSOMAL_S9"/>
    <property type="match status" value="1"/>
</dbReference>
<reference key="1">
    <citation type="journal article" date="2002" name="Science">
        <title>50 million years of genomic stasis in endosymbiotic bacteria.</title>
        <authorList>
            <person name="Tamas I."/>
            <person name="Klasson L."/>
            <person name="Canbaeck B."/>
            <person name="Naeslund A.K."/>
            <person name="Eriksson A.-S."/>
            <person name="Wernegreen J.J."/>
            <person name="Sandstroem J.P."/>
            <person name="Moran N.A."/>
            <person name="Andersson S.G.E."/>
        </authorList>
    </citation>
    <scope>NUCLEOTIDE SEQUENCE [LARGE SCALE GENOMIC DNA]</scope>
    <source>
        <strain>Sg</strain>
    </source>
</reference>
<protein>
    <recommendedName>
        <fullName evidence="1">Small ribosomal subunit protein uS9</fullName>
    </recommendedName>
    <alternativeName>
        <fullName evidence="3">30S ribosomal protein S9</fullName>
    </alternativeName>
</protein>
<comment type="similarity">
    <text evidence="1">Belongs to the universal ribosomal protein uS9 family.</text>
</comment>
<name>RS9_BUCAP</name>